<keyword id="KW-0687">Ribonucleoprotein</keyword>
<keyword id="KW-0689">Ribosomal protein</keyword>
<keyword id="KW-0694">RNA-binding</keyword>
<keyword id="KW-0699">rRNA-binding</keyword>
<proteinExistence type="inferred from homology"/>
<sequence>MSRARSGKVNKNRHKKILKLAKGYRGRAKNCFRIAIQKVEKALQYSYRDRRNRKRQFRALWIQRINAAVRQYDITYSQFINGLKQANITVDRKVMADLAVHNADSFVHLVELTKKSLAKTA</sequence>
<gene>
    <name evidence="1" type="primary">rplT</name>
    <name type="ordered locus">OTT_0789</name>
</gene>
<feature type="chain" id="PRO_1000122349" description="Large ribosomal subunit protein bL20">
    <location>
        <begin position="1"/>
        <end position="121"/>
    </location>
</feature>
<dbReference type="EMBL" id="AP008981">
    <property type="protein sequence ID" value="BAG40247.1"/>
    <property type="molecule type" value="Genomic_DNA"/>
</dbReference>
<dbReference type="RefSeq" id="WP_012461400.1">
    <property type="nucleotide sequence ID" value="NC_010793.1"/>
</dbReference>
<dbReference type="SMR" id="B3CRZ0"/>
<dbReference type="KEGG" id="ott:OTT_0789"/>
<dbReference type="HOGENOM" id="CLU_123265_0_1_5"/>
<dbReference type="OrthoDB" id="9808966at2"/>
<dbReference type="Proteomes" id="UP000001033">
    <property type="component" value="Chromosome"/>
</dbReference>
<dbReference type="GO" id="GO:1990904">
    <property type="term" value="C:ribonucleoprotein complex"/>
    <property type="evidence" value="ECO:0007669"/>
    <property type="project" value="UniProtKB-KW"/>
</dbReference>
<dbReference type="GO" id="GO:0005840">
    <property type="term" value="C:ribosome"/>
    <property type="evidence" value="ECO:0007669"/>
    <property type="project" value="UniProtKB-KW"/>
</dbReference>
<dbReference type="GO" id="GO:0019843">
    <property type="term" value="F:rRNA binding"/>
    <property type="evidence" value="ECO:0007669"/>
    <property type="project" value="UniProtKB-UniRule"/>
</dbReference>
<dbReference type="GO" id="GO:0003735">
    <property type="term" value="F:structural constituent of ribosome"/>
    <property type="evidence" value="ECO:0007669"/>
    <property type="project" value="InterPro"/>
</dbReference>
<dbReference type="GO" id="GO:0000027">
    <property type="term" value="P:ribosomal large subunit assembly"/>
    <property type="evidence" value="ECO:0007669"/>
    <property type="project" value="UniProtKB-UniRule"/>
</dbReference>
<dbReference type="GO" id="GO:0006412">
    <property type="term" value="P:translation"/>
    <property type="evidence" value="ECO:0007669"/>
    <property type="project" value="InterPro"/>
</dbReference>
<dbReference type="CDD" id="cd07026">
    <property type="entry name" value="Ribosomal_L20"/>
    <property type="match status" value="1"/>
</dbReference>
<dbReference type="FunFam" id="1.10.1900.20:FF:000001">
    <property type="entry name" value="50S ribosomal protein L20"/>
    <property type="match status" value="1"/>
</dbReference>
<dbReference type="Gene3D" id="6.10.160.10">
    <property type="match status" value="1"/>
</dbReference>
<dbReference type="Gene3D" id="1.10.1900.20">
    <property type="entry name" value="Ribosomal protein L20"/>
    <property type="match status" value="1"/>
</dbReference>
<dbReference type="HAMAP" id="MF_00382">
    <property type="entry name" value="Ribosomal_bL20"/>
    <property type="match status" value="1"/>
</dbReference>
<dbReference type="InterPro" id="IPR005813">
    <property type="entry name" value="Ribosomal_bL20"/>
</dbReference>
<dbReference type="InterPro" id="IPR049946">
    <property type="entry name" value="RIBOSOMAL_L20_CS"/>
</dbReference>
<dbReference type="InterPro" id="IPR035566">
    <property type="entry name" value="Ribosomal_protein_bL20_C"/>
</dbReference>
<dbReference type="NCBIfam" id="TIGR01032">
    <property type="entry name" value="rplT_bact"/>
    <property type="match status" value="1"/>
</dbReference>
<dbReference type="PANTHER" id="PTHR10986">
    <property type="entry name" value="39S RIBOSOMAL PROTEIN L20"/>
    <property type="match status" value="1"/>
</dbReference>
<dbReference type="Pfam" id="PF00453">
    <property type="entry name" value="Ribosomal_L20"/>
    <property type="match status" value="1"/>
</dbReference>
<dbReference type="PRINTS" id="PR00062">
    <property type="entry name" value="RIBOSOMALL20"/>
</dbReference>
<dbReference type="SUPFAM" id="SSF74731">
    <property type="entry name" value="Ribosomal protein L20"/>
    <property type="match status" value="1"/>
</dbReference>
<dbReference type="PROSITE" id="PS00937">
    <property type="entry name" value="RIBOSOMAL_L20"/>
    <property type="match status" value="1"/>
</dbReference>
<name>RL20_ORITI</name>
<evidence type="ECO:0000255" key="1">
    <source>
        <dbReference type="HAMAP-Rule" id="MF_00382"/>
    </source>
</evidence>
<evidence type="ECO:0000305" key="2"/>
<reference key="1">
    <citation type="journal article" date="2008" name="DNA Res.">
        <title>The whole-genome sequencing of the obligate intracellular bacterium Orientia tsutsugamushi revealed massive gene amplification during reductive genome evolution.</title>
        <authorList>
            <person name="Nakayama K."/>
            <person name="Yamashita A."/>
            <person name="Kurokawa K."/>
            <person name="Morimoto T."/>
            <person name="Ogawa M."/>
            <person name="Fukuhara M."/>
            <person name="Urakami H."/>
            <person name="Ohnishi M."/>
            <person name="Uchiyama I."/>
            <person name="Ogura Y."/>
            <person name="Ooka T."/>
            <person name="Oshima K."/>
            <person name="Tamura A."/>
            <person name="Hattori M."/>
            <person name="Hayashi T."/>
        </authorList>
    </citation>
    <scope>NUCLEOTIDE SEQUENCE [LARGE SCALE GENOMIC DNA]</scope>
    <source>
        <strain>Ikeda</strain>
    </source>
</reference>
<accession>B3CRZ0</accession>
<organism>
    <name type="scientific">Orientia tsutsugamushi (strain Ikeda)</name>
    <name type="common">Rickettsia tsutsugamushi</name>
    <dbReference type="NCBI Taxonomy" id="334380"/>
    <lineage>
        <taxon>Bacteria</taxon>
        <taxon>Pseudomonadati</taxon>
        <taxon>Pseudomonadota</taxon>
        <taxon>Alphaproteobacteria</taxon>
        <taxon>Rickettsiales</taxon>
        <taxon>Rickettsiaceae</taxon>
        <taxon>Rickettsieae</taxon>
        <taxon>Orientia</taxon>
    </lineage>
</organism>
<protein>
    <recommendedName>
        <fullName evidence="1">Large ribosomal subunit protein bL20</fullName>
    </recommendedName>
    <alternativeName>
        <fullName evidence="2">50S ribosomal protein L20</fullName>
    </alternativeName>
</protein>
<comment type="function">
    <text evidence="1">Binds directly to 23S ribosomal RNA and is necessary for the in vitro assembly process of the 50S ribosomal subunit. It is not involved in the protein synthesizing functions of that subunit.</text>
</comment>
<comment type="similarity">
    <text evidence="1">Belongs to the bacterial ribosomal protein bL20 family.</text>
</comment>